<reference key="1">
    <citation type="submission" date="2008-10" db="EMBL/GenBank/DDBJ databases">
        <title>Genome sequence of Clostridium botulinum A2 Kyoto.</title>
        <authorList>
            <person name="Shrivastava S."/>
            <person name="Brinkac L.M."/>
            <person name="Brown J.L."/>
            <person name="Bruce D."/>
            <person name="Detter C.C."/>
            <person name="Johnson E.A."/>
            <person name="Munk C.A."/>
            <person name="Smith L.A."/>
            <person name="Smith T.J."/>
            <person name="Sutton G."/>
            <person name="Brettin T.S."/>
        </authorList>
    </citation>
    <scope>NUCLEOTIDE SEQUENCE [LARGE SCALE GENOMIC DNA]</scope>
    <source>
        <strain>Kyoto / Type A2</strain>
    </source>
</reference>
<dbReference type="EC" id="2.3.1.274" evidence="1"/>
<dbReference type="EMBL" id="CP001581">
    <property type="protein sequence ID" value="ACO86970.1"/>
    <property type="molecule type" value="Genomic_DNA"/>
</dbReference>
<dbReference type="RefSeq" id="WP_003396953.1">
    <property type="nucleotide sequence ID" value="NC_012563.1"/>
</dbReference>
<dbReference type="SMR" id="C1FSM7"/>
<dbReference type="KEGG" id="cby:CLM_2750"/>
<dbReference type="eggNOG" id="COG0416">
    <property type="taxonomic scope" value="Bacteria"/>
</dbReference>
<dbReference type="HOGENOM" id="CLU_039379_1_1_9"/>
<dbReference type="UniPathway" id="UPA00085"/>
<dbReference type="Proteomes" id="UP000001374">
    <property type="component" value="Chromosome"/>
</dbReference>
<dbReference type="GO" id="GO:0005737">
    <property type="term" value="C:cytoplasm"/>
    <property type="evidence" value="ECO:0007669"/>
    <property type="project" value="UniProtKB-SubCell"/>
</dbReference>
<dbReference type="GO" id="GO:0043811">
    <property type="term" value="F:phosphate:acyl-[acyl carrier protein] acyltransferase activity"/>
    <property type="evidence" value="ECO:0007669"/>
    <property type="project" value="UniProtKB-UniRule"/>
</dbReference>
<dbReference type="GO" id="GO:0006633">
    <property type="term" value="P:fatty acid biosynthetic process"/>
    <property type="evidence" value="ECO:0007669"/>
    <property type="project" value="UniProtKB-UniRule"/>
</dbReference>
<dbReference type="GO" id="GO:0008654">
    <property type="term" value="P:phospholipid biosynthetic process"/>
    <property type="evidence" value="ECO:0007669"/>
    <property type="project" value="UniProtKB-KW"/>
</dbReference>
<dbReference type="Gene3D" id="3.40.718.10">
    <property type="entry name" value="Isopropylmalate Dehydrogenase"/>
    <property type="match status" value="1"/>
</dbReference>
<dbReference type="HAMAP" id="MF_00019">
    <property type="entry name" value="PlsX"/>
    <property type="match status" value="1"/>
</dbReference>
<dbReference type="InterPro" id="IPR003664">
    <property type="entry name" value="FA_synthesis"/>
</dbReference>
<dbReference type="InterPro" id="IPR012281">
    <property type="entry name" value="Phospholipid_synth_PlsX-like"/>
</dbReference>
<dbReference type="NCBIfam" id="TIGR00182">
    <property type="entry name" value="plsX"/>
    <property type="match status" value="1"/>
</dbReference>
<dbReference type="PANTHER" id="PTHR30100">
    <property type="entry name" value="FATTY ACID/PHOSPHOLIPID SYNTHESIS PROTEIN PLSX"/>
    <property type="match status" value="1"/>
</dbReference>
<dbReference type="PANTHER" id="PTHR30100:SF1">
    <property type="entry name" value="PHOSPHATE ACYLTRANSFERASE"/>
    <property type="match status" value="1"/>
</dbReference>
<dbReference type="Pfam" id="PF02504">
    <property type="entry name" value="FA_synthesis"/>
    <property type="match status" value="1"/>
</dbReference>
<dbReference type="PIRSF" id="PIRSF002465">
    <property type="entry name" value="Phsphlp_syn_PlsX"/>
    <property type="match status" value="1"/>
</dbReference>
<dbReference type="SUPFAM" id="SSF53659">
    <property type="entry name" value="Isocitrate/Isopropylmalate dehydrogenase-like"/>
    <property type="match status" value="1"/>
</dbReference>
<keyword id="KW-0963">Cytoplasm</keyword>
<keyword id="KW-0444">Lipid biosynthesis</keyword>
<keyword id="KW-0443">Lipid metabolism</keyword>
<keyword id="KW-0594">Phospholipid biosynthesis</keyword>
<keyword id="KW-1208">Phospholipid metabolism</keyword>
<keyword id="KW-0808">Transferase</keyword>
<proteinExistence type="inferred from homology"/>
<comment type="function">
    <text evidence="1">Catalyzes the reversible formation of acyl-phosphate (acyl-PO(4)) from acyl-[acyl-carrier-protein] (acyl-ACP). This enzyme utilizes acyl-ACP as fatty acyl donor, but not acyl-CoA.</text>
</comment>
<comment type="catalytic activity">
    <reaction evidence="1">
        <text>a fatty acyl-[ACP] + phosphate = an acyl phosphate + holo-[ACP]</text>
        <dbReference type="Rhea" id="RHEA:42292"/>
        <dbReference type="Rhea" id="RHEA-COMP:9685"/>
        <dbReference type="Rhea" id="RHEA-COMP:14125"/>
        <dbReference type="ChEBI" id="CHEBI:43474"/>
        <dbReference type="ChEBI" id="CHEBI:59918"/>
        <dbReference type="ChEBI" id="CHEBI:64479"/>
        <dbReference type="ChEBI" id="CHEBI:138651"/>
        <dbReference type="EC" id="2.3.1.274"/>
    </reaction>
</comment>
<comment type="pathway">
    <text evidence="1">Lipid metabolism; phospholipid metabolism.</text>
</comment>
<comment type="subunit">
    <text evidence="1">Homodimer. Probably interacts with PlsY.</text>
</comment>
<comment type="subcellular location">
    <subcellularLocation>
        <location evidence="1">Cytoplasm</location>
    </subcellularLocation>
    <text evidence="1">Associated with the membrane possibly through PlsY.</text>
</comment>
<comment type="similarity">
    <text evidence="1">Belongs to the PlsX family.</text>
</comment>
<organism>
    <name type="scientific">Clostridium botulinum (strain Kyoto / Type A2)</name>
    <dbReference type="NCBI Taxonomy" id="536232"/>
    <lineage>
        <taxon>Bacteria</taxon>
        <taxon>Bacillati</taxon>
        <taxon>Bacillota</taxon>
        <taxon>Clostridia</taxon>
        <taxon>Eubacteriales</taxon>
        <taxon>Clostridiaceae</taxon>
        <taxon>Clostridium</taxon>
    </lineage>
</organism>
<accession>C1FSM7</accession>
<name>PLSX_CLOBJ</name>
<gene>
    <name evidence="1" type="primary">plsX</name>
    <name type="ordered locus">CLM_2750</name>
</gene>
<protein>
    <recommendedName>
        <fullName evidence="1">Phosphate acyltransferase</fullName>
        <ecNumber evidence="1">2.3.1.274</ecNumber>
    </recommendedName>
    <alternativeName>
        <fullName evidence="1">Acyl-ACP phosphotransacylase</fullName>
    </alternativeName>
    <alternativeName>
        <fullName evidence="1">Acyl-[acyl-carrier-protein]--phosphate acyltransferase</fullName>
    </alternativeName>
    <alternativeName>
        <fullName evidence="1">Phosphate-acyl-ACP acyltransferase</fullName>
    </alternativeName>
</protein>
<feature type="chain" id="PRO_1000193130" description="Phosphate acyltransferase">
    <location>
        <begin position="1"/>
        <end position="335"/>
    </location>
</feature>
<sequence>MIIAVDGMGGDFAPELVVEGCIQAVKEYEGIHIIITGKKELIKNELDKREYNGNKIEILNAEEVISTNEAPVKAIRRKKDSSMVKALELVKEGKAQAVISAGSTGALMAGATFVLGRIKGINRVCLAPLLPGAKAPFMIADAGANVDCKAEYLVQFAMMGKVYFESVLGVKSPTVGLVNIGAEEEKGNELTKAAYKLLKDTDFNFIGNIEPRDIPRGEVNIAVCDGFIGNTVLKTYEGVASNLFSMLKKEIMASTRGKIGGALLKPVFKDFKKKFDYTEYGGSPFLGAKGICIKAHGSSDAKAFKNAIRQAKICYDKKIIEEIENNLGNLIENNI</sequence>
<evidence type="ECO:0000255" key="1">
    <source>
        <dbReference type="HAMAP-Rule" id="MF_00019"/>
    </source>
</evidence>